<dbReference type="EMBL" id="AY509815">
    <property type="protein sequence ID" value="AAS19388.1"/>
    <property type="molecule type" value="Genomic_DNA"/>
</dbReference>
<dbReference type="EMBL" id="AY509815">
    <property type="protein sequence ID" value="AAS19394.1"/>
    <property type="molecule type" value="Genomic_DNA"/>
</dbReference>
<dbReference type="EMBL" id="AY692264">
    <property type="protein sequence ID" value="AAU05193.1"/>
    <property type="molecule type" value="Genomic_DNA"/>
</dbReference>
<dbReference type="EMBL" id="AY543070">
    <property type="protein sequence ID" value="AAS77088.1"/>
    <property type="molecule type" value="Genomic_DNA"/>
</dbReference>
<dbReference type="EMBL" id="AY587007">
    <property type="protein sequence ID" value="AAX11974.1"/>
    <property type="molecule type" value="Genomic_DNA"/>
</dbReference>
<dbReference type="RefSeq" id="YP_006869.1">
    <molecule id="Q6R6U4-2"/>
    <property type="nucleotide sequence ID" value="NC_005859.1"/>
</dbReference>
<dbReference type="SMR" id="Q6R6U4"/>
<dbReference type="TCDB" id="1.E.8.1.4">
    <property type="family name" value="the t4 holin (t4 holin) family"/>
</dbReference>
<dbReference type="KEGG" id="vg:2777575"/>
<dbReference type="Proteomes" id="UP000002107">
    <property type="component" value="Genome"/>
</dbReference>
<dbReference type="Proteomes" id="UP000002141">
    <property type="component" value="Segment"/>
</dbReference>
<dbReference type="Proteomes" id="UP000002503">
    <property type="component" value="Segment"/>
</dbReference>
<dbReference type="GO" id="GO:0020002">
    <property type="term" value="C:host cell plasma membrane"/>
    <property type="evidence" value="ECO:0007669"/>
    <property type="project" value="UniProtKB-SubCell"/>
</dbReference>
<dbReference type="GO" id="GO:0016020">
    <property type="term" value="C:membrane"/>
    <property type="evidence" value="ECO:0007669"/>
    <property type="project" value="UniProtKB-UniRule"/>
</dbReference>
<dbReference type="GO" id="GO:0140911">
    <property type="term" value="F:pore-forming activity"/>
    <property type="evidence" value="ECO:0007669"/>
    <property type="project" value="UniProtKB-UniRule"/>
</dbReference>
<dbReference type="GO" id="GO:0044659">
    <property type="term" value="P:viral release from host cell by cytolysis"/>
    <property type="evidence" value="ECO:0007669"/>
    <property type="project" value="InterPro"/>
</dbReference>
<dbReference type="HAMAP" id="MF_04104">
    <property type="entry name" value="HOLIN_T4"/>
    <property type="match status" value="1"/>
</dbReference>
<dbReference type="InterPro" id="IPR020982">
    <property type="entry name" value="Phage_T4_GpT_holin"/>
</dbReference>
<dbReference type="Pfam" id="PF11031">
    <property type="entry name" value="Phage_holin_T"/>
    <property type="match status" value="1"/>
</dbReference>
<organism>
    <name type="scientific">Escherichia phage T5</name>
    <name type="common">Enterobacteria phage T5</name>
    <dbReference type="NCBI Taxonomy" id="2695836"/>
    <lineage>
        <taxon>Viruses</taxon>
        <taxon>Duplodnaviria</taxon>
        <taxon>Heunggongvirae</taxon>
        <taxon>Uroviricota</taxon>
        <taxon>Caudoviricetes</taxon>
        <taxon>Demerecviridae</taxon>
        <taxon>Markadamsvirinae</taxon>
        <taxon>Tequintavirus</taxon>
        <taxon>Tequintavirus T5</taxon>
    </lineage>
</organism>
<gene>
    <name evidence="5" type="primary">C1</name>
    <name evidence="4" type="ORF">orf11c</name>
    <name evidence="5" type="ORF">T5.041</name>
    <name evidence="6" type="ORF">T5p040</name>
</gene>
<comment type="function">
    <text evidence="1">Accumulates harmlessly in the cytoplasmic membrane until it reaches a critical concentration that triggers the formation of micron-scale pores (holes) causing host cell membrane disruption and endolysin escape into the periplasmic space. Determines the precise timing of host cell lysis. Regulated by specific antiholins that somehow sense superinfections and then delay lysis. Participates with the endolysin and spanin proteins in the sequential events which lead to the programmed host cell lysis releasing the mature viral particles from the host cell.</text>
</comment>
<comment type="subunit">
    <text evidence="1">Homomultimer. Heterotetramer composed of 2 holin and 2 antiholin. The holin-antiholin complex binds dsDNA. Interacts (via C-terminus) with antiholin (via C-terminus); this interaction blocks the holin homomultimerization and delays host cell lysis. Interacts (via N-terminus) with the lysis inhibition accessory protein rIII; this interaction stabilizes the holin-antiholin complex thereby resulting in a robust block of the hole formation.</text>
</comment>
<comment type="subcellular location">
    <subcellularLocation>
        <location evidence="1">Host cell inner membrane</location>
        <topology evidence="1">Single-pass type II membrane protein</topology>
        <orientation evidence="1">Periplasmic side</orientation>
    </subcellularLocation>
    <text evidence="1">Classified as a class III holin.</text>
</comment>
<comment type="alternative products">
    <event type="alternative initiation"/>
    <isoform>
        <id>Q6R6U4-1</id>
        <name>1</name>
        <sequence type="displayed"/>
    </isoform>
    <isoform>
        <id>Q6R6U4-2</id>
        <name>2</name>
        <sequence type="described" ref="VSP_058112"/>
    </isoform>
</comment>
<comment type="induction">
    <text evidence="3">Expressed in the early phase of the viral replicative cycle.</text>
</comment>
<comment type="domain">
    <text evidence="1">The C-terminus serves, in association with the antiholin, as a DNA sensor for lysis inhibition under superinfection conditions.</text>
</comment>
<comment type="PTM">
    <text evidence="1">Disulfide bond is required for functionality.</text>
</comment>
<comment type="similarity">
    <text evidence="1">Belongs to the T4likevirus holin family.</text>
</comment>
<name>HOLIN_BPT5</name>
<organismHost>
    <name type="scientific">Escherichia coli</name>
    <dbReference type="NCBI Taxonomy" id="562"/>
</organismHost>
<proteinExistence type="evidence at transcript level"/>
<feature type="chain" id="PRO_0000435546" description="Holin">
    <location>
        <begin position="1"/>
        <end position="227"/>
    </location>
</feature>
<feature type="topological domain" description="Cytoplasmic" evidence="1">
    <location>
        <begin position="1"/>
        <end position="33"/>
    </location>
</feature>
<feature type="transmembrane region" description="Helical; Signal-anchor for type II membrane protein" evidence="1">
    <location>
        <begin position="34"/>
        <end position="48"/>
    </location>
</feature>
<feature type="topological domain" description="Periplasmic" evidence="1">
    <location>
        <begin position="49"/>
        <end position="227"/>
    </location>
</feature>
<feature type="disulfide bond" evidence="1">
    <location>
        <begin position="178"/>
        <end position="216"/>
    </location>
</feature>
<feature type="splice variant" id="VSP_058112" description="In isoform 2.">
    <original>MVLVRGGYKL</original>
    <variation>M</variation>
    <location>
        <begin position="1"/>
        <end position="10"/>
    </location>
</feature>
<evidence type="ECO:0000255" key="1">
    <source>
        <dbReference type="HAMAP-Rule" id="MF_04104"/>
    </source>
</evidence>
<evidence type="ECO:0000303" key="2">
    <source>
    </source>
</evidence>
<evidence type="ECO:0000305" key="3">
    <source>
    </source>
</evidence>
<evidence type="ECO:0000312" key="4">
    <source>
        <dbReference type="EMBL" id="AAS19394.1"/>
    </source>
</evidence>
<evidence type="ECO:0000312" key="5">
    <source>
        <dbReference type="EMBL" id="AAS77088.1"/>
    </source>
</evidence>
<evidence type="ECO:0000312" key="6">
    <source>
        <dbReference type="EMBL" id="AAU05193.1"/>
    </source>
</evidence>
<evidence type="ECO:0000312" key="7">
    <source>
        <dbReference type="EMBL" id="AAX11974.1"/>
    </source>
</evidence>
<sequence length="227" mass="25869">MVLVRGGYKLEKFLQLLTVLLQEAKDPASLLKRLLTILVAVIIFLFVSNTSEVMSFLKTFSTSAVLQDVQTQRIDNFPNVAREKSMVLFSQTGADAVFVVKYKPDAINDYSNIIAWESNAQLDRADLADKAVNKTSELYRRHLEGFNYASDLTVKVNKYMGKNIPSFKNVIFNYIYTCPYFNLNNIYAGYIGIAWRDKPVDIADSEQFKEYLTKLCSPQQRSLGRSI</sequence>
<protein>
    <recommendedName>
        <fullName evidence="1 2">Holin</fullName>
    </recommendedName>
</protein>
<reference key="1">
    <citation type="journal article" date="2004" name="Protein Expr. Purif.">
        <title>Identification, cloning, and expression of bacteriophage T5 dnk gene encoding a broad specificity deoxyribonucleoside monophosphate kinase (EC 2.7.4.13).</title>
        <authorList>
            <person name="Mikoulinskaia G.V."/>
            <person name="Zimin A.A."/>
            <person name="Feofanov S.A."/>
            <person name="Miroshnikov A.I."/>
        </authorList>
    </citation>
    <scope>NUCLEOTIDE SEQUENCE [GENOMIC DNA] (ISOFORMS 1 AND 2)</scope>
</reference>
<reference key="2">
    <citation type="submission" date="2004-01" db="EMBL/GenBank/DDBJ databases">
        <title>Bacteriophage T5 complete genome.</title>
        <authorList>
            <person name="Ksenzenko V.N."/>
            <person name="Kaliman A.V."/>
            <person name="Krutilina A.I."/>
            <person name="Shlyapnikov M.G."/>
        </authorList>
    </citation>
    <scope>NUCLEOTIDE SEQUENCE [LARGE SCALE GENOMIC DNA]</scope>
</reference>
<reference key="3">
    <citation type="journal article" date="2005" name="Virology">
        <title>Complete genome sequence of bacteriophage T5.</title>
        <authorList>
            <person name="Wang J."/>
            <person name="Jiang Y."/>
            <person name="Vincent M."/>
            <person name="Sun Y."/>
            <person name="Yu H."/>
            <person name="Wang J."/>
            <person name="Bao Q."/>
            <person name="Kong H."/>
            <person name="Hu S."/>
        </authorList>
    </citation>
    <scope>NUCLEOTIDE SEQUENCE [LARGE SCALE GENOMIC DNA]</scope>
    <scope>INDUCTION</scope>
    <source>
        <strain evidence="7">ATCC 11303-B5</strain>
    </source>
</reference>
<reference key="4">
    <citation type="journal article" date="2014" name="J. Virol.">
        <title>Insights into bacteriophage T5 structure from analysis of its morphogenesis genes and protein components.</title>
        <authorList>
            <person name="Zivanovic Y."/>
            <person name="Confalonieri F."/>
            <person name="Ponchon L."/>
            <person name="Lurz R."/>
            <person name="Chami M."/>
            <person name="Flayhan A."/>
            <person name="Renouard M."/>
            <person name="Huet A."/>
            <person name="Decottignies P."/>
            <person name="Davidson A.R."/>
            <person name="Breyton C."/>
            <person name="Boulanger P."/>
        </authorList>
    </citation>
    <scope>NUCLEOTIDE SEQUENCE [LARGE SCALE GENOMIC DNA]</scope>
    <source>
        <strain>St0 deletion mutant</strain>
    </source>
</reference>
<keyword id="KW-0024">Alternative initiation</keyword>
<keyword id="KW-0204">Cytolysis</keyword>
<keyword id="KW-1015">Disulfide bond</keyword>
<keyword id="KW-1030">Host cell inner membrane</keyword>
<keyword id="KW-0578">Host cell lysis by virus</keyword>
<keyword id="KW-1032">Host cell membrane</keyword>
<keyword id="KW-1043">Host membrane</keyword>
<keyword id="KW-0472">Membrane</keyword>
<keyword id="KW-1185">Reference proteome</keyword>
<keyword id="KW-0735">Signal-anchor</keyword>
<keyword id="KW-0812">Transmembrane</keyword>
<keyword id="KW-1133">Transmembrane helix</keyword>
<keyword id="KW-1188">Viral release from host cell</keyword>
<accession>Q6R6U4</accession>
<accession>Q66M09</accession>
<accession>Q6QGP6</accession>